<keyword id="KW-0963">Cytoplasm</keyword>
<keyword id="KW-0396">Initiation factor</keyword>
<keyword id="KW-0648">Protein biosynthesis</keyword>
<keyword id="KW-1185">Reference proteome</keyword>
<keyword id="KW-0694">RNA-binding</keyword>
<keyword id="KW-0699">rRNA-binding</keyword>
<protein>
    <recommendedName>
        <fullName evidence="1">Translation initiation factor IF-1</fullName>
    </recommendedName>
</protein>
<dbReference type="EMBL" id="CP000828">
    <property type="protein sequence ID" value="ABW29688.1"/>
    <property type="molecule type" value="Genomic_DNA"/>
</dbReference>
<dbReference type="RefSeq" id="WP_010469293.1">
    <property type="nucleotide sequence ID" value="NC_009925.1"/>
</dbReference>
<dbReference type="SMR" id="B0C1F3"/>
<dbReference type="STRING" id="329726.AM1_4716"/>
<dbReference type="KEGG" id="amr:AM1_4716"/>
<dbReference type="eggNOG" id="COG0361">
    <property type="taxonomic scope" value="Bacteria"/>
</dbReference>
<dbReference type="HOGENOM" id="CLU_151267_1_0_3"/>
<dbReference type="OrthoDB" id="9803250at2"/>
<dbReference type="Proteomes" id="UP000000268">
    <property type="component" value="Chromosome"/>
</dbReference>
<dbReference type="GO" id="GO:0005829">
    <property type="term" value="C:cytosol"/>
    <property type="evidence" value="ECO:0007669"/>
    <property type="project" value="TreeGrafter"/>
</dbReference>
<dbReference type="GO" id="GO:0043022">
    <property type="term" value="F:ribosome binding"/>
    <property type="evidence" value="ECO:0007669"/>
    <property type="project" value="UniProtKB-UniRule"/>
</dbReference>
<dbReference type="GO" id="GO:0019843">
    <property type="term" value="F:rRNA binding"/>
    <property type="evidence" value="ECO:0007669"/>
    <property type="project" value="UniProtKB-UniRule"/>
</dbReference>
<dbReference type="GO" id="GO:0003743">
    <property type="term" value="F:translation initiation factor activity"/>
    <property type="evidence" value="ECO:0007669"/>
    <property type="project" value="UniProtKB-UniRule"/>
</dbReference>
<dbReference type="CDD" id="cd04451">
    <property type="entry name" value="S1_IF1"/>
    <property type="match status" value="1"/>
</dbReference>
<dbReference type="FunFam" id="2.40.50.140:FF:000002">
    <property type="entry name" value="Translation initiation factor IF-1"/>
    <property type="match status" value="1"/>
</dbReference>
<dbReference type="Gene3D" id="2.40.50.140">
    <property type="entry name" value="Nucleic acid-binding proteins"/>
    <property type="match status" value="1"/>
</dbReference>
<dbReference type="HAMAP" id="MF_00075">
    <property type="entry name" value="IF_1"/>
    <property type="match status" value="1"/>
</dbReference>
<dbReference type="InterPro" id="IPR012340">
    <property type="entry name" value="NA-bd_OB-fold"/>
</dbReference>
<dbReference type="InterPro" id="IPR006196">
    <property type="entry name" value="RNA-binding_domain_S1_IF1"/>
</dbReference>
<dbReference type="InterPro" id="IPR003029">
    <property type="entry name" value="S1_domain"/>
</dbReference>
<dbReference type="InterPro" id="IPR004368">
    <property type="entry name" value="TIF_IF1"/>
</dbReference>
<dbReference type="NCBIfam" id="TIGR00008">
    <property type="entry name" value="infA"/>
    <property type="match status" value="1"/>
</dbReference>
<dbReference type="PANTHER" id="PTHR33370">
    <property type="entry name" value="TRANSLATION INITIATION FACTOR IF-1, CHLOROPLASTIC"/>
    <property type="match status" value="1"/>
</dbReference>
<dbReference type="PANTHER" id="PTHR33370:SF1">
    <property type="entry name" value="TRANSLATION INITIATION FACTOR IF-1, CHLOROPLASTIC"/>
    <property type="match status" value="1"/>
</dbReference>
<dbReference type="Pfam" id="PF01176">
    <property type="entry name" value="eIF-1a"/>
    <property type="match status" value="1"/>
</dbReference>
<dbReference type="SMART" id="SM00316">
    <property type="entry name" value="S1"/>
    <property type="match status" value="1"/>
</dbReference>
<dbReference type="SUPFAM" id="SSF50249">
    <property type="entry name" value="Nucleic acid-binding proteins"/>
    <property type="match status" value="1"/>
</dbReference>
<dbReference type="PROSITE" id="PS50832">
    <property type="entry name" value="S1_IF1_TYPE"/>
    <property type="match status" value="1"/>
</dbReference>
<evidence type="ECO:0000255" key="1">
    <source>
        <dbReference type="HAMAP-Rule" id="MF_00075"/>
    </source>
</evidence>
<comment type="function">
    <text evidence="1">One of the essential components for the initiation of protein synthesis. Stabilizes the binding of IF-2 and IF-3 on the 30S subunit to which N-formylmethionyl-tRNA(fMet) subsequently binds. Helps modulate mRNA selection, yielding the 30S pre-initiation complex (PIC). Upon addition of the 50S ribosomal subunit IF-1, IF-2 and IF-3 are released leaving the mature 70S translation initiation complex.</text>
</comment>
<comment type="subunit">
    <text evidence="1">Component of the 30S ribosomal translation pre-initiation complex which assembles on the 30S ribosome in the order IF-2 and IF-3, IF-1 and N-formylmethionyl-tRNA(fMet); mRNA recruitment can occur at any time during PIC assembly.</text>
</comment>
<comment type="subcellular location">
    <subcellularLocation>
        <location evidence="1">Cytoplasm</location>
    </subcellularLocation>
</comment>
<comment type="similarity">
    <text evidence="1">Belongs to the IF-1 family.</text>
</comment>
<proteinExistence type="inferred from homology"/>
<sequence length="74" mass="8507">MAKQDAIEMEGTVTESLPNAMFRVDLDNGFNVLAHISGKIRRNYIKILPGDRVKVELTPYDLTKGRITYRLRKK</sequence>
<accession>B0C1F3</accession>
<organism>
    <name type="scientific">Acaryochloris marina (strain MBIC 11017)</name>
    <dbReference type="NCBI Taxonomy" id="329726"/>
    <lineage>
        <taxon>Bacteria</taxon>
        <taxon>Bacillati</taxon>
        <taxon>Cyanobacteriota</taxon>
        <taxon>Cyanophyceae</taxon>
        <taxon>Acaryochloridales</taxon>
        <taxon>Acaryochloridaceae</taxon>
        <taxon>Acaryochloris</taxon>
    </lineage>
</organism>
<feature type="chain" id="PRO_0000338741" description="Translation initiation factor IF-1">
    <location>
        <begin position="1"/>
        <end position="74"/>
    </location>
</feature>
<feature type="domain" description="S1-like" evidence="1">
    <location>
        <begin position="1"/>
        <end position="72"/>
    </location>
</feature>
<gene>
    <name evidence="1" type="primary">infA</name>
    <name type="ordered locus">AM1_4716</name>
</gene>
<name>IF1_ACAM1</name>
<reference key="1">
    <citation type="journal article" date="2008" name="Proc. Natl. Acad. Sci. U.S.A.">
        <title>Niche adaptation and genome expansion in the chlorophyll d-producing cyanobacterium Acaryochloris marina.</title>
        <authorList>
            <person name="Swingley W.D."/>
            <person name="Chen M."/>
            <person name="Cheung P.C."/>
            <person name="Conrad A.L."/>
            <person name="Dejesa L.C."/>
            <person name="Hao J."/>
            <person name="Honchak B.M."/>
            <person name="Karbach L.E."/>
            <person name="Kurdoglu A."/>
            <person name="Lahiri S."/>
            <person name="Mastrian S.D."/>
            <person name="Miyashita H."/>
            <person name="Page L."/>
            <person name="Ramakrishna P."/>
            <person name="Satoh S."/>
            <person name="Sattley W.M."/>
            <person name="Shimada Y."/>
            <person name="Taylor H.L."/>
            <person name="Tomo T."/>
            <person name="Tsuchiya T."/>
            <person name="Wang Z.T."/>
            <person name="Raymond J."/>
            <person name="Mimuro M."/>
            <person name="Blankenship R.E."/>
            <person name="Touchman J.W."/>
        </authorList>
    </citation>
    <scope>NUCLEOTIDE SEQUENCE [LARGE SCALE GENOMIC DNA]</scope>
    <source>
        <strain>MBIC 11017</strain>
    </source>
</reference>